<feature type="chain" id="PRO_0000367752" description="Glutamate--tRNA ligase 1">
    <location>
        <begin position="1"/>
        <end position="447"/>
    </location>
</feature>
<feature type="short sequence motif" description="'HIGH' region" evidence="1">
    <location>
        <begin position="10"/>
        <end position="20"/>
    </location>
</feature>
<feature type="short sequence motif" description="'KMSKS' region" evidence="1">
    <location>
        <begin position="240"/>
        <end position="244"/>
    </location>
</feature>
<feature type="binding site" evidence="1">
    <location>
        <position position="243"/>
    </location>
    <ligand>
        <name>ATP</name>
        <dbReference type="ChEBI" id="CHEBI:30616"/>
    </ligand>
</feature>
<keyword id="KW-0030">Aminoacyl-tRNA synthetase</keyword>
<keyword id="KW-0067">ATP-binding</keyword>
<keyword id="KW-0963">Cytoplasm</keyword>
<keyword id="KW-0436">Ligase</keyword>
<keyword id="KW-0547">Nucleotide-binding</keyword>
<keyword id="KW-0648">Protein biosynthesis</keyword>
<protein>
    <recommendedName>
        <fullName evidence="1">Glutamate--tRNA ligase 1</fullName>
        <ecNumber evidence="1">6.1.1.17</ecNumber>
    </recommendedName>
    <alternativeName>
        <fullName evidence="1">Glutamyl-tRNA synthetase 1</fullName>
        <shortName evidence="1">GluRS 1</shortName>
    </alternativeName>
</protein>
<comment type="function">
    <text evidence="1">Catalyzes the attachment of glutamate to tRNA(Glu) in a two-step reaction: glutamate is first activated by ATP to form Glu-AMP and then transferred to the acceptor end of tRNA(Glu).</text>
</comment>
<comment type="catalytic activity">
    <reaction evidence="1">
        <text>tRNA(Glu) + L-glutamate + ATP = L-glutamyl-tRNA(Glu) + AMP + diphosphate</text>
        <dbReference type="Rhea" id="RHEA:23540"/>
        <dbReference type="Rhea" id="RHEA-COMP:9663"/>
        <dbReference type="Rhea" id="RHEA-COMP:9680"/>
        <dbReference type="ChEBI" id="CHEBI:29985"/>
        <dbReference type="ChEBI" id="CHEBI:30616"/>
        <dbReference type="ChEBI" id="CHEBI:33019"/>
        <dbReference type="ChEBI" id="CHEBI:78442"/>
        <dbReference type="ChEBI" id="CHEBI:78520"/>
        <dbReference type="ChEBI" id="CHEBI:456215"/>
        <dbReference type="EC" id="6.1.1.17"/>
    </reaction>
</comment>
<comment type="subunit">
    <text evidence="1">Monomer.</text>
</comment>
<comment type="subcellular location">
    <subcellularLocation>
        <location evidence="1">Cytoplasm</location>
    </subcellularLocation>
</comment>
<comment type="similarity">
    <text evidence="1">Belongs to the class-I aminoacyl-tRNA synthetase family. Glutamate--tRNA ligase type 1 subfamily.</text>
</comment>
<accession>A8GN11</accession>
<reference key="1">
    <citation type="submission" date="2007-09" db="EMBL/GenBank/DDBJ databases">
        <title>Complete genome sequence of Rickettsia akari.</title>
        <authorList>
            <person name="Madan A."/>
            <person name="Fahey J."/>
            <person name="Helton E."/>
            <person name="Ketteman M."/>
            <person name="Madan A."/>
            <person name="Rodrigues S."/>
            <person name="Sanchez A."/>
            <person name="Whiting M."/>
            <person name="Dasch G."/>
            <person name="Eremeeva M."/>
        </authorList>
    </citation>
    <scope>NUCLEOTIDE SEQUENCE [LARGE SCALE GENOMIC DNA]</scope>
    <source>
        <strain>Hartford</strain>
    </source>
</reference>
<name>SYE1_RICAH</name>
<dbReference type="EC" id="6.1.1.17" evidence="1"/>
<dbReference type="EMBL" id="CP000847">
    <property type="protein sequence ID" value="ABV74786.1"/>
    <property type="molecule type" value="Genomic_DNA"/>
</dbReference>
<dbReference type="RefSeq" id="WP_012149420.1">
    <property type="nucleotide sequence ID" value="NC_009881.1"/>
</dbReference>
<dbReference type="SMR" id="A8GN11"/>
<dbReference type="STRING" id="293614.A1C_02435"/>
<dbReference type="KEGG" id="rak:A1C_02435"/>
<dbReference type="eggNOG" id="COG0008">
    <property type="taxonomic scope" value="Bacteria"/>
</dbReference>
<dbReference type="HOGENOM" id="CLU_015768_6_1_5"/>
<dbReference type="Proteomes" id="UP000006830">
    <property type="component" value="Chromosome"/>
</dbReference>
<dbReference type="GO" id="GO:0005737">
    <property type="term" value="C:cytoplasm"/>
    <property type="evidence" value="ECO:0007669"/>
    <property type="project" value="UniProtKB-SubCell"/>
</dbReference>
<dbReference type="GO" id="GO:0005524">
    <property type="term" value="F:ATP binding"/>
    <property type="evidence" value="ECO:0007669"/>
    <property type="project" value="UniProtKB-UniRule"/>
</dbReference>
<dbReference type="GO" id="GO:0004818">
    <property type="term" value="F:glutamate-tRNA ligase activity"/>
    <property type="evidence" value="ECO:0007669"/>
    <property type="project" value="UniProtKB-UniRule"/>
</dbReference>
<dbReference type="GO" id="GO:0000049">
    <property type="term" value="F:tRNA binding"/>
    <property type="evidence" value="ECO:0007669"/>
    <property type="project" value="InterPro"/>
</dbReference>
<dbReference type="GO" id="GO:0006424">
    <property type="term" value="P:glutamyl-tRNA aminoacylation"/>
    <property type="evidence" value="ECO:0007669"/>
    <property type="project" value="UniProtKB-UniRule"/>
</dbReference>
<dbReference type="Gene3D" id="1.10.10.350">
    <property type="match status" value="1"/>
</dbReference>
<dbReference type="Gene3D" id="3.40.50.620">
    <property type="entry name" value="HUPs"/>
    <property type="match status" value="1"/>
</dbReference>
<dbReference type="HAMAP" id="MF_00022">
    <property type="entry name" value="Glu_tRNA_synth_type1"/>
    <property type="match status" value="1"/>
</dbReference>
<dbReference type="InterPro" id="IPR045462">
    <property type="entry name" value="aa-tRNA-synth_I_cd-bd"/>
</dbReference>
<dbReference type="InterPro" id="IPR020751">
    <property type="entry name" value="aa-tRNA-synth_I_codon-bd_sub2"/>
</dbReference>
<dbReference type="InterPro" id="IPR001412">
    <property type="entry name" value="aa-tRNA-synth_I_CS"/>
</dbReference>
<dbReference type="InterPro" id="IPR008925">
    <property type="entry name" value="aa_tRNA-synth_I_cd-bd_sf"/>
</dbReference>
<dbReference type="InterPro" id="IPR004527">
    <property type="entry name" value="Glu-tRNA-ligase_bac/mito"/>
</dbReference>
<dbReference type="InterPro" id="IPR000924">
    <property type="entry name" value="Glu/Gln-tRNA-synth"/>
</dbReference>
<dbReference type="InterPro" id="IPR020058">
    <property type="entry name" value="Glu/Gln-tRNA-synth_Ib_cat-dom"/>
</dbReference>
<dbReference type="InterPro" id="IPR049940">
    <property type="entry name" value="GluQ/Sye"/>
</dbReference>
<dbReference type="InterPro" id="IPR014729">
    <property type="entry name" value="Rossmann-like_a/b/a_fold"/>
</dbReference>
<dbReference type="NCBIfam" id="TIGR00464">
    <property type="entry name" value="gltX_bact"/>
    <property type="match status" value="1"/>
</dbReference>
<dbReference type="PANTHER" id="PTHR43311">
    <property type="entry name" value="GLUTAMATE--TRNA LIGASE"/>
    <property type="match status" value="1"/>
</dbReference>
<dbReference type="PANTHER" id="PTHR43311:SF2">
    <property type="entry name" value="GLUTAMATE--TRNA LIGASE, MITOCHONDRIAL-RELATED"/>
    <property type="match status" value="1"/>
</dbReference>
<dbReference type="Pfam" id="PF19269">
    <property type="entry name" value="Anticodon_2"/>
    <property type="match status" value="1"/>
</dbReference>
<dbReference type="Pfam" id="PF00749">
    <property type="entry name" value="tRNA-synt_1c"/>
    <property type="match status" value="1"/>
</dbReference>
<dbReference type="PRINTS" id="PR00987">
    <property type="entry name" value="TRNASYNTHGLU"/>
</dbReference>
<dbReference type="SUPFAM" id="SSF48163">
    <property type="entry name" value="An anticodon-binding domain of class I aminoacyl-tRNA synthetases"/>
    <property type="match status" value="1"/>
</dbReference>
<dbReference type="SUPFAM" id="SSF52374">
    <property type="entry name" value="Nucleotidylyl transferase"/>
    <property type="match status" value="1"/>
</dbReference>
<dbReference type="PROSITE" id="PS00178">
    <property type="entry name" value="AA_TRNA_LIGASE_I"/>
    <property type="match status" value="1"/>
</dbReference>
<organism>
    <name type="scientific">Rickettsia akari (strain Hartford)</name>
    <dbReference type="NCBI Taxonomy" id="293614"/>
    <lineage>
        <taxon>Bacteria</taxon>
        <taxon>Pseudomonadati</taxon>
        <taxon>Pseudomonadota</taxon>
        <taxon>Alphaproteobacteria</taxon>
        <taxon>Rickettsiales</taxon>
        <taxon>Rickettsiaceae</taxon>
        <taxon>Rickettsieae</taxon>
        <taxon>Rickettsia</taxon>
        <taxon>spotted fever group</taxon>
    </lineage>
</organism>
<proteinExistence type="inferred from homology"/>
<gene>
    <name evidence="1" type="primary">gltX1</name>
    <name type="ordered locus">A1C_02435</name>
</gene>
<sequence>MTKVITRFAPSPTGMLHVGNIRVALLNWLYAKKHNGQFILRFDDTDLERSKQEYKDAIKDDLKFLNLHWDQTFNQLSRLSRYDEIKNLLLDKKRLYACYETPDELELKRKFQLSKGLPPMYDRASLNLTEEQTEKYIEQGRNPHYRFLVNHEPISWHDMIKGEIQYDGKALSDPIVIRADGSMTYMLCSVIDDIDYDITHIIRGEDHVSNTAIQIQMFEALNNTPTTFGHLSLIINKDEKISKRVGGFEITTLRKEIGIEAMAIASFFSLLGSSAQILPYKSMEKLINQFEISSFSKSPTIYQPKDLERLNHKLLISLDFDEVKDHLKEIDAEYIDENFWLSIRPNLQKLRDVKDWWEICHHTPNVESLNLDQEYLKQAAELLPQGAITKDSWSIWTKEITNITGRKGKELFLPLRLALTGRESGPEIADVLPLISREEIVKRLTSA</sequence>
<evidence type="ECO:0000255" key="1">
    <source>
        <dbReference type="HAMAP-Rule" id="MF_00022"/>
    </source>
</evidence>